<feature type="chain" id="PRO_1000187817" description="Demethylmenaquinone methyltransferase">
    <location>
        <begin position="1"/>
        <end position="230"/>
    </location>
</feature>
<feature type="binding site" evidence="1">
    <location>
        <position position="62"/>
    </location>
    <ligand>
        <name>S-adenosyl-L-methionine</name>
        <dbReference type="ChEBI" id="CHEBI:59789"/>
    </ligand>
</feature>
<feature type="binding site" evidence="1">
    <location>
        <position position="80"/>
    </location>
    <ligand>
        <name>S-adenosyl-L-methionine</name>
        <dbReference type="ChEBI" id="CHEBI:59789"/>
    </ligand>
</feature>
<feature type="binding site" evidence="1">
    <location>
        <begin position="102"/>
        <end position="103"/>
    </location>
    <ligand>
        <name>S-adenosyl-L-methionine</name>
        <dbReference type="ChEBI" id="CHEBI:59789"/>
    </ligand>
</feature>
<feature type="binding site" evidence="1">
    <location>
        <position position="119"/>
    </location>
    <ligand>
        <name>S-adenosyl-L-methionine</name>
        <dbReference type="ChEBI" id="CHEBI:59789"/>
    </ligand>
</feature>
<name>MENG_STRGG</name>
<reference key="1">
    <citation type="journal article" date="2008" name="J. Bacteriol.">
        <title>Genome sequence of the streptomycin-producing microorganism Streptomyces griseus IFO 13350.</title>
        <authorList>
            <person name="Ohnishi Y."/>
            <person name="Ishikawa J."/>
            <person name="Hara H."/>
            <person name="Suzuki H."/>
            <person name="Ikenoya M."/>
            <person name="Ikeda H."/>
            <person name="Yamashita A."/>
            <person name="Hattori M."/>
            <person name="Horinouchi S."/>
        </authorList>
    </citation>
    <scope>NUCLEOTIDE SEQUENCE [LARGE SCALE GENOMIC DNA]</scope>
    <source>
        <strain>JCM 4626 / CBS 651.72 / NBRC 13350 / KCC S-0626 / ISP 5235</strain>
    </source>
</reference>
<protein>
    <recommendedName>
        <fullName evidence="1">Demethylmenaquinone methyltransferase</fullName>
        <ecNumber evidence="1">2.1.1.163</ecNumber>
    </recommendedName>
</protein>
<dbReference type="EC" id="2.1.1.163" evidence="1"/>
<dbReference type="EMBL" id="AP009493">
    <property type="protein sequence ID" value="BAG19819.1"/>
    <property type="molecule type" value="Genomic_DNA"/>
</dbReference>
<dbReference type="RefSeq" id="WP_012379562.1">
    <property type="nucleotide sequence ID" value="NC_010572.1"/>
</dbReference>
<dbReference type="SMR" id="B1W525"/>
<dbReference type="KEGG" id="sgr:SGR_2990"/>
<dbReference type="PATRIC" id="fig|455632.4.peg.3051"/>
<dbReference type="eggNOG" id="COG2226">
    <property type="taxonomic scope" value="Bacteria"/>
</dbReference>
<dbReference type="HOGENOM" id="CLU_037990_0_0_11"/>
<dbReference type="UniPathway" id="UPA00079">
    <property type="reaction ID" value="UER00169"/>
</dbReference>
<dbReference type="Proteomes" id="UP000001685">
    <property type="component" value="Chromosome"/>
</dbReference>
<dbReference type="GO" id="GO:0043770">
    <property type="term" value="F:demethylmenaquinone methyltransferase activity"/>
    <property type="evidence" value="ECO:0007669"/>
    <property type="project" value="UniProtKB-UniRule"/>
</dbReference>
<dbReference type="GO" id="GO:0009234">
    <property type="term" value="P:menaquinone biosynthetic process"/>
    <property type="evidence" value="ECO:0007669"/>
    <property type="project" value="UniProtKB-UniRule"/>
</dbReference>
<dbReference type="GO" id="GO:0032259">
    <property type="term" value="P:methylation"/>
    <property type="evidence" value="ECO:0007669"/>
    <property type="project" value="UniProtKB-KW"/>
</dbReference>
<dbReference type="CDD" id="cd02440">
    <property type="entry name" value="AdoMet_MTases"/>
    <property type="match status" value="1"/>
</dbReference>
<dbReference type="Gene3D" id="3.40.50.150">
    <property type="entry name" value="Vaccinia Virus protein VP39"/>
    <property type="match status" value="1"/>
</dbReference>
<dbReference type="HAMAP" id="MF_01813">
    <property type="entry name" value="MenG_UbiE_methyltr"/>
    <property type="match status" value="1"/>
</dbReference>
<dbReference type="InterPro" id="IPR029063">
    <property type="entry name" value="SAM-dependent_MTases_sf"/>
</dbReference>
<dbReference type="InterPro" id="IPR004033">
    <property type="entry name" value="UbiE/COQ5_MeTrFase"/>
</dbReference>
<dbReference type="InterPro" id="IPR023576">
    <property type="entry name" value="UbiE/COQ5_MeTrFase_CS"/>
</dbReference>
<dbReference type="NCBIfam" id="TIGR01934">
    <property type="entry name" value="MenG_MenH_UbiE"/>
    <property type="match status" value="1"/>
</dbReference>
<dbReference type="NCBIfam" id="NF001241">
    <property type="entry name" value="PRK00216.1-2"/>
    <property type="match status" value="1"/>
</dbReference>
<dbReference type="PANTHER" id="PTHR43591:SF24">
    <property type="entry name" value="2-METHOXY-6-POLYPRENYL-1,4-BENZOQUINOL METHYLASE, MITOCHONDRIAL"/>
    <property type="match status" value="1"/>
</dbReference>
<dbReference type="PANTHER" id="PTHR43591">
    <property type="entry name" value="METHYLTRANSFERASE"/>
    <property type="match status" value="1"/>
</dbReference>
<dbReference type="Pfam" id="PF01209">
    <property type="entry name" value="Ubie_methyltran"/>
    <property type="match status" value="1"/>
</dbReference>
<dbReference type="SUPFAM" id="SSF53335">
    <property type="entry name" value="S-adenosyl-L-methionine-dependent methyltransferases"/>
    <property type="match status" value="1"/>
</dbReference>
<dbReference type="PROSITE" id="PS51608">
    <property type="entry name" value="SAM_MT_UBIE"/>
    <property type="match status" value="1"/>
</dbReference>
<dbReference type="PROSITE" id="PS01184">
    <property type="entry name" value="UBIE_2"/>
    <property type="match status" value="1"/>
</dbReference>
<sequence>MTRASLEKQPHEVASMFDGVAANYDLTNDVISLGQARLWRRAVAAAVDARPAQKILDLAAGTATSSQPFVKAGAYVVPCDFSLGMLKVGKERHPWMPFTAGDGMRLPFKDETFDTVTISFGLRNIQDTEVALRELYRVTKPGGRVVICEFSQPTWTPFRTVYTEYLMRAIPPAARAVSSNPDAYVYLAESIRDWPDQPALAALLQKAGWSKVAWRNLTGGVVALHRATRA</sequence>
<organism>
    <name type="scientific">Streptomyces griseus subsp. griseus (strain JCM 4626 / CBS 651.72 / NBRC 13350 / KCC S-0626 / ISP 5235)</name>
    <dbReference type="NCBI Taxonomy" id="455632"/>
    <lineage>
        <taxon>Bacteria</taxon>
        <taxon>Bacillati</taxon>
        <taxon>Actinomycetota</taxon>
        <taxon>Actinomycetes</taxon>
        <taxon>Kitasatosporales</taxon>
        <taxon>Streptomycetaceae</taxon>
        <taxon>Streptomyces</taxon>
    </lineage>
</organism>
<accession>B1W525</accession>
<keyword id="KW-0474">Menaquinone biosynthesis</keyword>
<keyword id="KW-0489">Methyltransferase</keyword>
<keyword id="KW-0949">S-adenosyl-L-methionine</keyword>
<keyword id="KW-0808">Transferase</keyword>
<comment type="function">
    <text evidence="1">Methyltransferase required for the conversion of demethylmenaquinol (DMKH2) to menaquinol (MKH2).</text>
</comment>
<comment type="catalytic activity">
    <reaction evidence="1">
        <text>a 2-demethylmenaquinol + S-adenosyl-L-methionine = a menaquinol + S-adenosyl-L-homocysteine + H(+)</text>
        <dbReference type="Rhea" id="RHEA:42640"/>
        <dbReference type="Rhea" id="RHEA-COMP:9539"/>
        <dbReference type="Rhea" id="RHEA-COMP:9563"/>
        <dbReference type="ChEBI" id="CHEBI:15378"/>
        <dbReference type="ChEBI" id="CHEBI:18151"/>
        <dbReference type="ChEBI" id="CHEBI:55437"/>
        <dbReference type="ChEBI" id="CHEBI:57856"/>
        <dbReference type="ChEBI" id="CHEBI:59789"/>
        <dbReference type="EC" id="2.1.1.163"/>
    </reaction>
</comment>
<comment type="pathway">
    <text evidence="1">Quinol/quinone metabolism; menaquinone biosynthesis; menaquinol from 1,4-dihydroxy-2-naphthoate: step 2/2.</text>
</comment>
<comment type="similarity">
    <text evidence="1">Belongs to the class I-like SAM-binding methyltransferase superfamily. MenG/UbiE family.</text>
</comment>
<evidence type="ECO:0000255" key="1">
    <source>
        <dbReference type="HAMAP-Rule" id="MF_01813"/>
    </source>
</evidence>
<gene>
    <name evidence="1" type="primary">menG</name>
    <name type="ordered locus">SGR_2990</name>
</gene>
<proteinExistence type="inferred from homology"/>